<protein>
    <recommendedName>
        <fullName evidence="1">Small ribosomal subunit protein bS18</fullName>
    </recommendedName>
    <alternativeName>
        <fullName evidence="2">30S ribosomal protein S18</fullName>
    </alternativeName>
</protein>
<proteinExistence type="inferred from homology"/>
<accession>B2UV09</accession>
<reference key="1">
    <citation type="submission" date="2008-05" db="EMBL/GenBank/DDBJ databases">
        <title>Genome sequence of Helicobacter pylori from the remote Amazon: traces of Asian ancestry of the first Americans.</title>
        <authorList>
            <person name="Kersulyte D."/>
            <person name="Kalia A."/>
            <person name="Gilman R.H."/>
            <person name="Berg D.E."/>
        </authorList>
    </citation>
    <scope>NUCLEOTIDE SEQUENCE [LARGE SCALE GENOMIC DNA]</scope>
    <source>
        <strain>Shi470</strain>
    </source>
</reference>
<comment type="function">
    <text evidence="1">Binds as a heterodimer with protein bS6 to the central domain of the 16S rRNA, where it helps stabilize the platform of the 30S subunit.</text>
</comment>
<comment type="subunit">
    <text evidence="1">Part of the 30S ribosomal subunit. Forms a tight heterodimer with protein bS6.</text>
</comment>
<comment type="similarity">
    <text evidence="1">Belongs to the bacterial ribosomal protein bS18 family.</text>
</comment>
<organism>
    <name type="scientific">Helicobacter pylori (strain Shi470)</name>
    <dbReference type="NCBI Taxonomy" id="512562"/>
    <lineage>
        <taxon>Bacteria</taxon>
        <taxon>Pseudomonadati</taxon>
        <taxon>Campylobacterota</taxon>
        <taxon>Epsilonproteobacteria</taxon>
        <taxon>Campylobacterales</taxon>
        <taxon>Helicobacteraceae</taxon>
        <taxon>Helicobacter</taxon>
    </lineage>
</organism>
<feature type="chain" id="PRO_1000114425" description="Small ribosomal subunit protein bS18">
    <location>
        <begin position="1"/>
        <end position="85"/>
    </location>
</feature>
<sequence length="85" mass="10476">MERKRYSKRYCKYTEAKISFIDYKDLDMLKHTLSERYKIMPRRLTGNSKKWQERVEVAIKRARHMALIPYIVDRKRVVDSPFKQH</sequence>
<dbReference type="EMBL" id="CP001072">
    <property type="protein sequence ID" value="ACD48691.1"/>
    <property type="molecule type" value="Genomic_DNA"/>
</dbReference>
<dbReference type="RefSeq" id="WP_000440198.1">
    <property type="nucleotide sequence ID" value="NC_010698.2"/>
</dbReference>
<dbReference type="SMR" id="B2UV09"/>
<dbReference type="KEGG" id="hps:HPSH_06445"/>
<dbReference type="HOGENOM" id="CLU_148710_2_2_7"/>
<dbReference type="GO" id="GO:0022627">
    <property type="term" value="C:cytosolic small ribosomal subunit"/>
    <property type="evidence" value="ECO:0007669"/>
    <property type="project" value="TreeGrafter"/>
</dbReference>
<dbReference type="GO" id="GO:0070181">
    <property type="term" value="F:small ribosomal subunit rRNA binding"/>
    <property type="evidence" value="ECO:0007669"/>
    <property type="project" value="TreeGrafter"/>
</dbReference>
<dbReference type="GO" id="GO:0003735">
    <property type="term" value="F:structural constituent of ribosome"/>
    <property type="evidence" value="ECO:0007669"/>
    <property type="project" value="InterPro"/>
</dbReference>
<dbReference type="GO" id="GO:0006412">
    <property type="term" value="P:translation"/>
    <property type="evidence" value="ECO:0007669"/>
    <property type="project" value="UniProtKB-UniRule"/>
</dbReference>
<dbReference type="FunFam" id="4.10.640.10:FF:000005">
    <property type="entry name" value="30S ribosomal protein S18"/>
    <property type="match status" value="1"/>
</dbReference>
<dbReference type="Gene3D" id="4.10.640.10">
    <property type="entry name" value="Ribosomal protein S18"/>
    <property type="match status" value="1"/>
</dbReference>
<dbReference type="HAMAP" id="MF_00270">
    <property type="entry name" value="Ribosomal_bS18"/>
    <property type="match status" value="1"/>
</dbReference>
<dbReference type="InterPro" id="IPR001648">
    <property type="entry name" value="Ribosomal_bS18"/>
</dbReference>
<dbReference type="InterPro" id="IPR018275">
    <property type="entry name" value="Ribosomal_bS18_CS"/>
</dbReference>
<dbReference type="InterPro" id="IPR036870">
    <property type="entry name" value="Ribosomal_bS18_sf"/>
</dbReference>
<dbReference type="NCBIfam" id="TIGR00165">
    <property type="entry name" value="S18"/>
    <property type="match status" value="1"/>
</dbReference>
<dbReference type="PANTHER" id="PTHR13479">
    <property type="entry name" value="30S RIBOSOMAL PROTEIN S18"/>
    <property type="match status" value="1"/>
</dbReference>
<dbReference type="PANTHER" id="PTHR13479:SF40">
    <property type="entry name" value="SMALL RIBOSOMAL SUBUNIT PROTEIN BS18M"/>
    <property type="match status" value="1"/>
</dbReference>
<dbReference type="Pfam" id="PF01084">
    <property type="entry name" value="Ribosomal_S18"/>
    <property type="match status" value="1"/>
</dbReference>
<dbReference type="PRINTS" id="PR00974">
    <property type="entry name" value="RIBOSOMALS18"/>
</dbReference>
<dbReference type="SUPFAM" id="SSF46911">
    <property type="entry name" value="Ribosomal protein S18"/>
    <property type="match status" value="1"/>
</dbReference>
<dbReference type="PROSITE" id="PS00057">
    <property type="entry name" value="RIBOSOMAL_S18"/>
    <property type="match status" value="1"/>
</dbReference>
<gene>
    <name evidence="1" type="primary">rpsR</name>
    <name type="ordered locus">HPSH_06445</name>
</gene>
<name>RS18_HELPS</name>
<evidence type="ECO:0000255" key="1">
    <source>
        <dbReference type="HAMAP-Rule" id="MF_00270"/>
    </source>
</evidence>
<evidence type="ECO:0000305" key="2"/>
<keyword id="KW-0687">Ribonucleoprotein</keyword>
<keyword id="KW-0689">Ribosomal protein</keyword>
<keyword id="KW-0694">RNA-binding</keyword>
<keyword id="KW-0699">rRNA-binding</keyword>